<evidence type="ECO:0000255" key="1">
    <source>
        <dbReference type="HAMAP-Rule" id="MF_00036"/>
    </source>
</evidence>
<feature type="chain" id="PRO_0000075172" description="Alanine--tRNA ligase">
    <location>
        <begin position="1"/>
        <end position="892"/>
    </location>
</feature>
<feature type="binding site" evidence="1">
    <location>
        <position position="574"/>
    </location>
    <ligand>
        <name>Zn(2+)</name>
        <dbReference type="ChEBI" id="CHEBI:29105"/>
    </ligand>
</feature>
<feature type="binding site" evidence="1">
    <location>
        <position position="578"/>
    </location>
    <ligand>
        <name>Zn(2+)</name>
        <dbReference type="ChEBI" id="CHEBI:29105"/>
    </ligand>
</feature>
<feature type="binding site" evidence="1">
    <location>
        <position position="676"/>
    </location>
    <ligand>
        <name>Zn(2+)</name>
        <dbReference type="ChEBI" id="CHEBI:29105"/>
    </ligand>
</feature>
<feature type="binding site" evidence="1">
    <location>
        <position position="680"/>
    </location>
    <ligand>
        <name>Zn(2+)</name>
        <dbReference type="ChEBI" id="CHEBI:29105"/>
    </ligand>
</feature>
<sequence>MAVERLSSNSEMKSLTGEEIRAAFLNFYAERGHEIVPSASLVPNDPTVLLTIAGMLPFKPVFLGHQDRPSARVTSCQKCIRTNDIENVGRTARHHTFFEMLGNFSFGDYFKKEAIQWAWELSINVFGLNPSHIVISIFREDDEAEQIWRDVIGVNPRRIIRMDEKDNFWSSGPTGPCGPCSELYYDFHPELGEEEIDLEDDTRFIEFYNLVFMQYNRNSSGTLTSLANCNIDTGMGLERMAQILQGVANNYETDLIYPLLEKIASLIDVQYEDLNATIKASFKVIGDHTRACVHLIGDGVSASNLGRGYVLRRLLRRVVRHGRLIGITKPFLVQIAEVAIELMQSAYPQLLERRQLIFKELQREETRFLETLEKGEKLLAELLSKAPSVITGEAAFELYDTYGFPVELTEEIAEENDLRVDMKGFKKAMDEQRRRAKSAAMTIDLTLQDTIDKVVSEVGETNFLGYQQLEQFSQVQAIVVNGVSSQECNVGDKIDIVLNMTPFYGEGGGQIGDRGIISSASSDDSECLIEIDSVRRVKGAFVHSGLVKNGVLTLGDNVQCTVDSFSRRCAQANHTATHLLQAALKKAVDSDITQAGSLVDFDRLRFDFHFVRPVSGAELEHIEKLINGWISEAHSLVISEMSINEAKRVGAIAMFGEKYGEVVRVVDVPGVSKELCGGTHVTNTAEIGLFKIVSETGIAAGIRRIEAIAGQGVLDYLNDRDGVVKILSERFKAQSNEIVDRVIALQDEVKSLTKLLVKAQDEVAFTKALSLKNKVVSLTNSQYLIERLDGVTGDAIQSVVKTLVDELGDNAAVVLAGMPDLNDQKKVILVAAFGSEIIAQGLHAGQFLGPIAEICGGGGGGRPNFAQAGGRDPTKLDDALDLAKERIIQSLD</sequence>
<keyword id="KW-0030">Aminoacyl-tRNA synthetase</keyword>
<keyword id="KW-0067">ATP-binding</keyword>
<keyword id="KW-0963">Cytoplasm</keyword>
<keyword id="KW-0436">Ligase</keyword>
<keyword id="KW-0479">Metal-binding</keyword>
<keyword id="KW-0547">Nucleotide-binding</keyword>
<keyword id="KW-0648">Protein biosynthesis</keyword>
<keyword id="KW-1185">Reference proteome</keyword>
<keyword id="KW-0694">RNA-binding</keyword>
<keyword id="KW-0820">tRNA-binding</keyword>
<keyword id="KW-0862">Zinc</keyword>
<accession>Q7VEG5</accession>
<name>SYA_PROMA</name>
<comment type="function">
    <text evidence="1">Catalyzes the attachment of alanine to tRNA(Ala) in a two-step reaction: alanine is first activated by ATP to form Ala-AMP and then transferred to the acceptor end of tRNA(Ala). Also edits incorrectly charged Ser-tRNA(Ala) and Gly-tRNA(Ala) via its editing domain.</text>
</comment>
<comment type="catalytic activity">
    <reaction evidence="1">
        <text>tRNA(Ala) + L-alanine + ATP = L-alanyl-tRNA(Ala) + AMP + diphosphate</text>
        <dbReference type="Rhea" id="RHEA:12540"/>
        <dbReference type="Rhea" id="RHEA-COMP:9657"/>
        <dbReference type="Rhea" id="RHEA-COMP:9923"/>
        <dbReference type="ChEBI" id="CHEBI:30616"/>
        <dbReference type="ChEBI" id="CHEBI:33019"/>
        <dbReference type="ChEBI" id="CHEBI:57972"/>
        <dbReference type="ChEBI" id="CHEBI:78442"/>
        <dbReference type="ChEBI" id="CHEBI:78497"/>
        <dbReference type="ChEBI" id="CHEBI:456215"/>
        <dbReference type="EC" id="6.1.1.7"/>
    </reaction>
</comment>
<comment type="cofactor">
    <cofactor evidence="1">
        <name>Zn(2+)</name>
        <dbReference type="ChEBI" id="CHEBI:29105"/>
    </cofactor>
    <text evidence="1">Binds 1 zinc ion per subunit.</text>
</comment>
<comment type="subcellular location">
    <subcellularLocation>
        <location evidence="1">Cytoplasm</location>
    </subcellularLocation>
</comment>
<comment type="domain">
    <text evidence="1">Consists of three domains; the N-terminal catalytic domain, the editing domain and the C-terminal C-Ala domain. The editing domain removes incorrectly charged amino acids, while the C-Ala domain, along with tRNA(Ala), serves as a bridge to cooperatively bring together the editing and aminoacylation centers thus stimulating deacylation of misacylated tRNAs.</text>
</comment>
<comment type="similarity">
    <text evidence="1">Belongs to the class-II aminoacyl-tRNA synthetase family.</text>
</comment>
<dbReference type="EC" id="6.1.1.7" evidence="1"/>
<dbReference type="EMBL" id="AE017126">
    <property type="protein sequence ID" value="AAP99094.1"/>
    <property type="molecule type" value="Genomic_DNA"/>
</dbReference>
<dbReference type="RefSeq" id="NP_874442.1">
    <property type="nucleotide sequence ID" value="NC_005042.1"/>
</dbReference>
<dbReference type="RefSeq" id="WP_011124203.1">
    <property type="nucleotide sequence ID" value="NC_005042.1"/>
</dbReference>
<dbReference type="SMR" id="Q7VEG5"/>
<dbReference type="STRING" id="167539.Pro_0048"/>
<dbReference type="EnsemblBacteria" id="AAP99094">
    <property type="protein sequence ID" value="AAP99094"/>
    <property type="gene ID" value="Pro_0048"/>
</dbReference>
<dbReference type="KEGG" id="pma:Pro_0048"/>
<dbReference type="PATRIC" id="fig|167539.5.peg.50"/>
<dbReference type="eggNOG" id="COG0013">
    <property type="taxonomic scope" value="Bacteria"/>
</dbReference>
<dbReference type="HOGENOM" id="CLU_004485_1_0_3"/>
<dbReference type="OrthoDB" id="9803884at2"/>
<dbReference type="Proteomes" id="UP000001420">
    <property type="component" value="Chromosome"/>
</dbReference>
<dbReference type="GO" id="GO:0005829">
    <property type="term" value="C:cytosol"/>
    <property type="evidence" value="ECO:0007669"/>
    <property type="project" value="TreeGrafter"/>
</dbReference>
<dbReference type="GO" id="GO:0004813">
    <property type="term" value="F:alanine-tRNA ligase activity"/>
    <property type="evidence" value="ECO:0007669"/>
    <property type="project" value="UniProtKB-UniRule"/>
</dbReference>
<dbReference type="GO" id="GO:0002161">
    <property type="term" value="F:aminoacyl-tRNA deacylase activity"/>
    <property type="evidence" value="ECO:0007669"/>
    <property type="project" value="TreeGrafter"/>
</dbReference>
<dbReference type="GO" id="GO:0005524">
    <property type="term" value="F:ATP binding"/>
    <property type="evidence" value="ECO:0007669"/>
    <property type="project" value="UniProtKB-UniRule"/>
</dbReference>
<dbReference type="GO" id="GO:0000049">
    <property type="term" value="F:tRNA binding"/>
    <property type="evidence" value="ECO:0007669"/>
    <property type="project" value="UniProtKB-KW"/>
</dbReference>
<dbReference type="GO" id="GO:0008270">
    <property type="term" value="F:zinc ion binding"/>
    <property type="evidence" value="ECO:0007669"/>
    <property type="project" value="UniProtKB-UniRule"/>
</dbReference>
<dbReference type="GO" id="GO:0006419">
    <property type="term" value="P:alanyl-tRNA aminoacylation"/>
    <property type="evidence" value="ECO:0007669"/>
    <property type="project" value="UniProtKB-UniRule"/>
</dbReference>
<dbReference type="CDD" id="cd00673">
    <property type="entry name" value="AlaRS_core"/>
    <property type="match status" value="1"/>
</dbReference>
<dbReference type="FunFam" id="3.10.310.40:FF:000001">
    <property type="entry name" value="Alanine--tRNA ligase"/>
    <property type="match status" value="1"/>
</dbReference>
<dbReference type="FunFam" id="3.30.54.20:FF:000001">
    <property type="entry name" value="Alanine--tRNA ligase"/>
    <property type="match status" value="1"/>
</dbReference>
<dbReference type="FunFam" id="3.30.930.10:FF:000004">
    <property type="entry name" value="Alanine--tRNA ligase"/>
    <property type="match status" value="1"/>
</dbReference>
<dbReference type="FunFam" id="3.30.980.10:FF:000004">
    <property type="entry name" value="Alanine--tRNA ligase, cytoplasmic"/>
    <property type="match status" value="1"/>
</dbReference>
<dbReference type="Gene3D" id="2.40.30.130">
    <property type="match status" value="1"/>
</dbReference>
<dbReference type="Gene3D" id="3.10.310.40">
    <property type="match status" value="1"/>
</dbReference>
<dbReference type="Gene3D" id="3.30.54.20">
    <property type="match status" value="1"/>
</dbReference>
<dbReference type="Gene3D" id="3.30.930.10">
    <property type="entry name" value="Bira Bifunctional Protein, Domain 2"/>
    <property type="match status" value="1"/>
</dbReference>
<dbReference type="Gene3D" id="3.30.980.10">
    <property type="entry name" value="Threonyl-trna Synthetase, Chain A, domain 2"/>
    <property type="match status" value="1"/>
</dbReference>
<dbReference type="HAMAP" id="MF_00036_B">
    <property type="entry name" value="Ala_tRNA_synth_B"/>
    <property type="match status" value="1"/>
</dbReference>
<dbReference type="InterPro" id="IPR045864">
    <property type="entry name" value="aa-tRNA-synth_II/BPL/LPL"/>
</dbReference>
<dbReference type="InterPro" id="IPR002318">
    <property type="entry name" value="Ala-tRNA-lgiase_IIc"/>
</dbReference>
<dbReference type="InterPro" id="IPR018162">
    <property type="entry name" value="Ala-tRNA-ligase_IIc_anticod-bd"/>
</dbReference>
<dbReference type="InterPro" id="IPR018165">
    <property type="entry name" value="Ala-tRNA-synth_IIc_core"/>
</dbReference>
<dbReference type="InterPro" id="IPR018164">
    <property type="entry name" value="Ala-tRNA-synth_IIc_N"/>
</dbReference>
<dbReference type="InterPro" id="IPR050058">
    <property type="entry name" value="Ala-tRNA_ligase"/>
</dbReference>
<dbReference type="InterPro" id="IPR023033">
    <property type="entry name" value="Ala_tRNA_ligase_euk/bac"/>
</dbReference>
<dbReference type="InterPro" id="IPR003156">
    <property type="entry name" value="DHHA1_dom"/>
</dbReference>
<dbReference type="InterPro" id="IPR018163">
    <property type="entry name" value="Thr/Ala-tRNA-synth_IIc_edit"/>
</dbReference>
<dbReference type="InterPro" id="IPR009000">
    <property type="entry name" value="Transl_B-barrel_sf"/>
</dbReference>
<dbReference type="InterPro" id="IPR012947">
    <property type="entry name" value="tRNA_SAD"/>
</dbReference>
<dbReference type="NCBIfam" id="TIGR00344">
    <property type="entry name" value="alaS"/>
    <property type="match status" value="1"/>
</dbReference>
<dbReference type="PANTHER" id="PTHR11777:SF9">
    <property type="entry name" value="ALANINE--TRNA LIGASE, CYTOPLASMIC"/>
    <property type="match status" value="1"/>
</dbReference>
<dbReference type="PANTHER" id="PTHR11777">
    <property type="entry name" value="ALANYL-TRNA SYNTHETASE"/>
    <property type="match status" value="1"/>
</dbReference>
<dbReference type="Pfam" id="PF02272">
    <property type="entry name" value="DHHA1"/>
    <property type="match status" value="1"/>
</dbReference>
<dbReference type="Pfam" id="PF01411">
    <property type="entry name" value="tRNA-synt_2c"/>
    <property type="match status" value="1"/>
</dbReference>
<dbReference type="Pfam" id="PF07973">
    <property type="entry name" value="tRNA_SAD"/>
    <property type="match status" value="1"/>
</dbReference>
<dbReference type="PRINTS" id="PR00980">
    <property type="entry name" value="TRNASYNTHALA"/>
</dbReference>
<dbReference type="SMART" id="SM00863">
    <property type="entry name" value="tRNA_SAD"/>
    <property type="match status" value="1"/>
</dbReference>
<dbReference type="SUPFAM" id="SSF55681">
    <property type="entry name" value="Class II aaRS and biotin synthetases"/>
    <property type="match status" value="1"/>
</dbReference>
<dbReference type="SUPFAM" id="SSF101353">
    <property type="entry name" value="Putative anticodon-binding domain of alanyl-tRNA synthetase (AlaRS)"/>
    <property type="match status" value="1"/>
</dbReference>
<dbReference type="SUPFAM" id="SSF55186">
    <property type="entry name" value="ThrRS/AlaRS common domain"/>
    <property type="match status" value="1"/>
</dbReference>
<dbReference type="SUPFAM" id="SSF50447">
    <property type="entry name" value="Translation proteins"/>
    <property type="match status" value="1"/>
</dbReference>
<dbReference type="PROSITE" id="PS50860">
    <property type="entry name" value="AA_TRNA_LIGASE_II_ALA"/>
    <property type="match status" value="1"/>
</dbReference>
<reference key="1">
    <citation type="journal article" date="2003" name="Proc. Natl. Acad. Sci. U.S.A.">
        <title>Genome sequence of the cyanobacterium Prochlorococcus marinus SS120, a nearly minimal oxyphototrophic genome.</title>
        <authorList>
            <person name="Dufresne A."/>
            <person name="Salanoubat M."/>
            <person name="Partensky F."/>
            <person name="Artiguenave F."/>
            <person name="Axmann I.M."/>
            <person name="Barbe V."/>
            <person name="Duprat S."/>
            <person name="Galperin M.Y."/>
            <person name="Koonin E.V."/>
            <person name="Le Gall F."/>
            <person name="Makarova K.S."/>
            <person name="Ostrowski M."/>
            <person name="Oztas S."/>
            <person name="Robert C."/>
            <person name="Rogozin I.B."/>
            <person name="Scanlan D.J."/>
            <person name="Tandeau de Marsac N."/>
            <person name="Weissenbach J."/>
            <person name="Wincker P."/>
            <person name="Wolf Y.I."/>
            <person name="Hess W.R."/>
        </authorList>
    </citation>
    <scope>NUCLEOTIDE SEQUENCE [LARGE SCALE GENOMIC DNA]</scope>
    <source>
        <strain>SARG / CCMP1375 / SS120</strain>
    </source>
</reference>
<organism>
    <name type="scientific">Prochlorococcus marinus (strain SARG / CCMP1375 / SS120)</name>
    <dbReference type="NCBI Taxonomy" id="167539"/>
    <lineage>
        <taxon>Bacteria</taxon>
        <taxon>Bacillati</taxon>
        <taxon>Cyanobacteriota</taxon>
        <taxon>Cyanophyceae</taxon>
        <taxon>Synechococcales</taxon>
        <taxon>Prochlorococcaceae</taxon>
        <taxon>Prochlorococcus</taxon>
    </lineage>
</organism>
<protein>
    <recommendedName>
        <fullName evidence="1">Alanine--tRNA ligase</fullName>
        <ecNumber evidence="1">6.1.1.7</ecNumber>
    </recommendedName>
    <alternativeName>
        <fullName evidence="1">Alanyl-tRNA synthetase</fullName>
        <shortName evidence="1">AlaRS</shortName>
    </alternativeName>
</protein>
<gene>
    <name evidence="1" type="primary">alaS</name>
    <name type="ordered locus">Pro_0048</name>
</gene>
<proteinExistence type="inferred from homology"/>